<dbReference type="EC" id="3.6.5.-" evidence="1"/>
<dbReference type="EMBL" id="BC124798">
    <property type="protein sequence ID" value="AAI24799.1"/>
    <property type="molecule type" value="mRNA"/>
</dbReference>
<dbReference type="RefSeq" id="NP_001073463.1">
    <property type="nucleotide sequence ID" value="NM_001079994.1"/>
</dbReference>
<dbReference type="SMR" id="Q08BB1"/>
<dbReference type="FunCoup" id="Q08BB1">
    <property type="interactions" value="1897"/>
</dbReference>
<dbReference type="STRING" id="7955.ENSDARP00000087584"/>
<dbReference type="PaxDb" id="7955-ENSDARP00000087584"/>
<dbReference type="Ensembl" id="ENSDART00000093152">
    <property type="protein sequence ID" value="ENSDARP00000087584"/>
    <property type="gene ID" value="ENSDARG00000063624"/>
</dbReference>
<dbReference type="GeneID" id="561840"/>
<dbReference type="KEGG" id="dre:561840"/>
<dbReference type="AGR" id="ZFIN:ZDB-GENE-061013-79"/>
<dbReference type="CTD" id="85476"/>
<dbReference type="ZFIN" id="ZDB-GENE-061013-79">
    <property type="gene designation" value="gfm1"/>
</dbReference>
<dbReference type="eggNOG" id="KOG0465">
    <property type="taxonomic scope" value="Eukaryota"/>
</dbReference>
<dbReference type="HOGENOM" id="CLU_002794_4_0_1"/>
<dbReference type="InParanoid" id="Q08BB1"/>
<dbReference type="OMA" id="GQFAKVQ"/>
<dbReference type="OrthoDB" id="198619at2759"/>
<dbReference type="PhylomeDB" id="Q08BB1"/>
<dbReference type="TreeFam" id="TF105631"/>
<dbReference type="Reactome" id="R-DRE-5389840">
    <property type="pathway name" value="Mitochondrial translation elongation"/>
</dbReference>
<dbReference type="UniPathway" id="UPA00345"/>
<dbReference type="PRO" id="PR:Q08BB1"/>
<dbReference type="Proteomes" id="UP000000437">
    <property type="component" value="Chromosome 15"/>
</dbReference>
<dbReference type="Bgee" id="ENSDARG00000063624">
    <property type="expression patterns" value="Expressed in muscle tissue and 29 other cell types or tissues"/>
</dbReference>
<dbReference type="GO" id="GO:0005739">
    <property type="term" value="C:mitochondrion"/>
    <property type="evidence" value="ECO:0000318"/>
    <property type="project" value="GO_Central"/>
</dbReference>
<dbReference type="GO" id="GO:0005525">
    <property type="term" value="F:GTP binding"/>
    <property type="evidence" value="ECO:0007669"/>
    <property type="project" value="UniProtKB-UniRule"/>
</dbReference>
<dbReference type="GO" id="GO:0003924">
    <property type="term" value="F:GTPase activity"/>
    <property type="evidence" value="ECO:0000250"/>
    <property type="project" value="UniProtKB"/>
</dbReference>
<dbReference type="GO" id="GO:0003746">
    <property type="term" value="F:translation elongation factor activity"/>
    <property type="evidence" value="ECO:0000250"/>
    <property type="project" value="UniProtKB"/>
</dbReference>
<dbReference type="GO" id="GO:0070125">
    <property type="term" value="P:mitochondrial translational elongation"/>
    <property type="evidence" value="ECO:0000250"/>
    <property type="project" value="UniProtKB"/>
</dbReference>
<dbReference type="CDD" id="cd01886">
    <property type="entry name" value="EF-G"/>
    <property type="match status" value="1"/>
</dbReference>
<dbReference type="CDD" id="cd16262">
    <property type="entry name" value="EFG_III"/>
    <property type="match status" value="1"/>
</dbReference>
<dbReference type="CDD" id="cd01434">
    <property type="entry name" value="EFG_mtEFG1_IV"/>
    <property type="match status" value="1"/>
</dbReference>
<dbReference type="CDD" id="cd04097">
    <property type="entry name" value="mtEFG1_C"/>
    <property type="match status" value="1"/>
</dbReference>
<dbReference type="CDD" id="cd04091">
    <property type="entry name" value="mtEFG1_II_like"/>
    <property type="match status" value="1"/>
</dbReference>
<dbReference type="FunFam" id="3.30.230.10:FF:000003">
    <property type="entry name" value="Elongation factor G"/>
    <property type="match status" value="1"/>
</dbReference>
<dbReference type="FunFam" id="3.30.70.240:FF:000001">
    <property type="entry name" value="Elongation factor G"/>
    <property type="match status" value="1"/>
</dbReference>
<dbReference type="FunFam" id="2.40.30.10:FF:000022">
    <property type="entry name" value="Elongation factor G, mitochondrial"/>
    <property type="match status" value="1"/>
</dbReference>
<dbReference type="FunFam" id="3.30.70.870:FF:000008">
    <property type="entry name" value="Elongation factor G, mitochondrial"/>
    <property type="match status" value="1"/>
</dbReference>
<dbReference type="FunFam" id="3.40.50.300:FF:000539">
    <property type="entry name" value="Elongation factor G, mitochondrial"/>
    <property type="match status" value="1"/>
</dbReference>
<dbReference type="Gene3D" id="3.30.230.10">
    <property type="match status" value="1"/>
</dbReference>
<dbReference type="Gene3D" id="3.30.70.240">
    <property type="match status" value="1"/>
</dbReference>
<dbReference type="Gene3D" id="3.30.70.870">
    <property type="entry name" value="Elongation Factor G (Translational Gtpase), domain 3"/>
    <property type="match status" value="1"/>
</dbReference>
<dbReference type="Gene3D" id="3.40.50.300">
    <property type="entry name" value="P-loop containing nucleotide triphosphate hydrolases"/>
    <property type="match status" value="1"/>
</dbReference>
<dbReference type="Gene3D" id="2.40.30.10">
    <property type="entry name" value="Translation factors"/>
    <property type="match status" value="1"/>
</dbReference>
<dbReference type="HAMAP" id="MF_00054_B">
    <property type="entry name" value="EF_G_EF_2_B"/>
    <property type="match status" value="1"/>
</dbReference>
<dbReference type="InterPro" id="IPR041095">
    <property type="entry name" value="EFG_II"/>
</dbReference>
<dbReference type="InterPro" id="IPR009022">
    <property type="entry name" value="EFG_III"/>
</dbReference>
<dbReference type="InterPro" id="IPR035647">
    <property type="entry name" value="EFG_III/V"/>
</dbReference>
<dbReference type="InterPro" id="IPR047872">
    <property type="entry name" value="EFG_IV"/>
</dbReference>
<dbReference type="InterPro" id="IPR035649">
    <property type="entry name" value="EFG_V"/>
</dbReference>
<dbReference type="InterPro" id="IPR000640">
    <property type="entry name" value="EFG_V-like"/>
</dbReference>
<dbReference type="InterPro" id="IPR004161">
    <property type="entry name" value="EFTu-like_2"/>
</dbReference>
<dbReference type="InterPro" id="IPR031157">
    <property type="entry name" value="G_TR_CS"/>
</dbReference>
<dbReference type="InterPro" id="IPR027417">
    <property type="entry name" value="P-loop_NTPase"/>
</dbReference>
<dbReference type="InterPro" id="IPR020568">
    <property type="entry name" value="Ribosomal_Su5_D2-typ_SF"/>
</dbReference>
<dbReference type="InterPro" id="IPR014721">
    <property type="entry name" value="Ribsml_uS5_D2-typ_fold_subgr"/>
</dbReference>
<dbReference type="InterPro" id="IPR005225">
    <property type="entry name" value="Small_GTP-bd"/>
</dbReference>
<dbReference type="InterPro" id="IPR000795">
    <property type="entry name" value="T_Tr_GTP-bd_dom"/>
</dbReference>
<dbReference type="InterPro" id="IPR009000">
    <property type="entry name" value="Transl_B-barrel_sf"/>
</dbReference>
<dbReference type="InterPro" id="IPR004540">
    <property type="entry name" value="Transl_elong_EFG/EF2"/>
</dbReference>
<dbReference type="InterPro" id="IPR005517">
    <property type="entry name" value="Transl_elong_EFG/EF2_IV"/>
</dbReference>
<dbReference type="NCBIfam" id="TIGR00484">
    <property type="entry name" value="EF-G"/>
    <property type="match status" value="1"/>
</dbReference>
<dbReference type="NCBIfam" id="NF009381">
    <property type="entry name" value="PRK12740.1-5"/>
    <property type="match status" value="1"/>
</dbReference>
<dbReference type="NCBIfam" id="TIGR00231">
    <property type="entry name" value="small_GTP"/>
    <property type="match status" value="1"/>
</dbReference>
<dbReference type="PANTHER" id="PTHR43636">
    <property type="entry name" value="ELONGATION FACTOR G, MITOCHONDRIAL"/>
    <property type="match status" value="1"/>
</dbReference>
<dbReference type="PANTHER" id="PTHR43636:SF2">
    <property type="entry name" value="ELONGATION FACTOR G, MITOCHONDRIAL"/>
    <property type="match status" value="1"/>
</dbReference>
<dbReference type="Pfam" id="PF00679">
    <property type="entry name" value="EFG_C"/>
    <property type="match status" value="1"/>
</dbReference>
<dbReference type="Pfam" id="PF14492">
    <property type="entry name" value="EFG_III"/>
    <property type="match status" value="1"/>
</dbReference>
<dbReference type="Pfam" id="PF03764">
    <property type="entry name" value="EFG_IV"/>
    <property type="match status" value="1"/>
</dbReference>
<dbReference type="Pfam" id="PF00009">
    <property type="entry name" value="GTP_EFTU"/>
    <property type="match status" value="1"/>
</dbReference>
<dbReference type="Pfam" id="PF03144">
    <property type="entry name" value="GTP_EFTU_D2"/>
    <property type="match status" value="1"/>
</dbReference>
<dbReference type="PRINTS" id="PR00315">
    <property type="entry name" value="ELONGATNFCT"/>
</dbReference>
<dbReference type="SMART" id="SM00838">
    <property type="entry name" value="EFG_C"/>
    <property type="match status" value="1"/>
</dbReference>
<dbReference type="SMART" id="SM00889">
    <property type="entry name" value="EFG_IV"/>
    <property type="match status" value="1"/>
</dbReference>
<dbReference type="SUPFAM" id="SSF54980">
    <property type="entry name" value="EF-G C-terminal domain-like"/>
    <property type="match status" value="2"/>
</dbReference>
<dbReference type="SUPFAM" id="SSF52540">
    <property type="entry name" value="P-loop containing nucleoside triphosphate hydrolases"/>
    <property type="match status" value="1"/>
</dbReference>
<dbReference type="SUPFAM" id="SSF54211">
    <property type="entry name" value="Ribosomal protein S5 domain 2-like"/>
    <property type="match status" value="1"/>
</dbReference>
<dbReference type="SUPFAM" id="SSF50447">
    <property type="entry name" value="Translation proteins"/>
    <property type="match status" value="1"/>
</dbReference>
<dbReference type="PROSITE" id="PS00301">
    <property type="entry name" value="G_TR_1"/>
    <property type="match status" value="1"/>
</dbReference>
<dbReference type="PROSITE" id="PS51722">
    <property type="entry name" value="G_TR_2"/>
    <property type="match status" value="1"/>
</dbReference>
<accession>Q08BB1</accession>
<feature type="transit peptide" description="Mitochondrion" evidence="2">
    <location>
        <begin position="1"/>
        <end position="30"/>
    </location>
</feature>
<feature type="chain" id="PRO_0000385538" description="Elongation factor G, mitochondrial">
    <location>
        <begin position="31"/>
        <end position="745"/>
    </location>
</feature>
<feature type="domain" description="tr-type G">
    <location>
        <begin position="39"/>
        <end position="316"/>
    </location>
</feature>
<feature type="binding site" evidence="2">
    <location>
        <begin position="48"/>
        <end position="55"/>
    </location>
    <ligand>
        <name>GTP</name>
        <dbReference type="ChEBI" id="CHEBI:37565"/>
    </ligand>
</feature>
<feature type="binding site" evidence="2">
    <location>
        <begin position="115"/>
        <end position="119"/>
    </location>
    <ligand>
        <name>GTP</name>
        <dbReference type="ChEBI" id="CHEBI:37565"/>
    </ligand>
</feature>
<feature type="binding site" evidence="2">
    <location>
        <begin position="169"/>
        <end position="172"/>
    </location>
    <ligand>
        <name>GTP</name>
        <dbReference type="ChEBI" id="CHEBI:37565"/>
    </ligand>
</feature>
<keyword id="KW-0251">Elongation factor</keyword>
<keyword id="KW-0342">GTP-binding</keyword>
<keyword id="KW-0378">Hydrolase</keyword>
<keyword id="KW-0496">Mitochondrion</keyword>
<keyword id="KW-0547">Nucleotide-binding</keyword>
<keyword id="KW-0648">Protein biosynthesis</keyword>
<keyword id="KW-1185">Reference proteome</keyword>
<keyword id="KW-0809">Transit peptide</keyword>
<comment type="function">
    <text evidence="2">Mitochondrial GTPase that catalyzes the GTP-dependent ribosomal translocation step during translation elongation. During this step, the ribosome changes from the pre-translocational (PRE) to the post-translocational (POST) state as the newly formed A-site-bound peptidyl-tRNA and P-site-bound deacylated tRNA move to the P and E sites, respectively. Catalyzes the coordinated movement of the two tRNA molecules, the mRNA and conformational changes in the ribosome. Does not mediate the disassembly of ribosomes from messenger RNA at the termination of mitochondrial protein biosynthesis.</text>
</comment>
<comment type="catalytic activity">
    <reaction evidence="1">
        <text>GTP + H2O = GDP + phosphate + H(+)</text>
        <dbReference type="Rhea" id="RHEA:19669"/>
        <dbReference type="ChEBI" id="CHEBI:15377"/>
        <dbReference type="ChEBI" id="CHEBI:15378"/>
        <dbReference type="ChEBI" id="CHEBI:37565"/>
        <dbReference type="ChEBI" id="CHEBI:43474"/>
        <dbReference type="ChEBI" id="CHEBI:58189"/>
    </reaction>
    <physiologicalReaction direction="left-to-right" evidence="1">
        <dbReference type="Rhea" id="RHEA:19670"/>
    </physiologicalReaction>
</comment>
<comment type="pathway">
    <text evidence="2">Protein biosynthesis; polypeptide chain elongation.</text>
</comment>
<comment type="subcellular location">
    <subcellularLocation>
        <location evidence="2">Mitochondrion</location>
    </subcellularLocation>
</comment>
<comment type="similarity">
    <text evidence="3">Belongs to the TRAFAC class translation factor GTPase superfamily. Classic translation factor GTPase family. EF-G/EF-2 subfamily.</text>
</comment>
<name>EFGM_DANRE</name>
<evidence type="ECO:0000250" key="1">
    <source>
        <dbReference type="UniProtKB" id="Q96RP9"/>
    </source>
</evidence>
<evidence type="ECO:0000255" key="2">
    <source>
        <dbReference type="HAMAP-Rule" id="MF_03061"/>
    </source>
</evidence>
<evidence type="ECO:0000305" key="3"/>
<protein>
    <recommendedName>
        <fullName evidence="2">Elongation factor G, mitochondrial</fullName>
        <shortName evidence="2">EF-Gmt</shortName>
        <ecNumber evidence="1">3.6.5.-</ecNumber>
    </recommendedName>
    <alternativeName>
        <fullName evidence="2">Elongation factor G 1, mitochondrial</fullName>
        <shortName evidence="2">mEF-G 1</shortName>
    </alternativeName>
    <alternativeName>
        <fullName evidence="2">Elongation factor G1</fullName>
    </alternativeName>
</protein>
<sequence>MRLLRAASSLARLHRPGHSTLQQVLISCRSCSNGITPNERIRNIGISAHIDSGKTTLTERVLYYTGRIAEMHEVRGKDGVGAIMDSMELERQRGITIQSAATYTMWKNHNINIIDTPGHVDFTIEVERSLRVLDGAVLVLCAVGGVQCQTVTVNRQMKRYSVPFLTFINKLDRLGANPNRALQQLRTKLNQNAAFVNIPIGLEGNLRGIIDLIEERSIVFDGPFGESVRYEDIPPEMRSEAADRRQELVECVANADETLGEMFLEERVPTVLDLKAAVRRATVKRSFSPVLVGSALKNKGVQPLLDAVLEYLPNPTEVQNYAILNEEGESEGSKILMDSTRDDTQPFVGLAFKLEAGRFGQLTYVRVYQGCLRKTDYIHNSRTGRRVRVQRLVRLHADQMEDVEVAYAGDICALFGIDCASGDTFTARNNANLSMESIHVPEPVISMAIRPSNKNDTDKLSKGISRFTREDPTFRVHFDTESKETIISGMGELHLEIYSQRMEREYSCPCVMGKPKVAFRETLTSAVPFEYTHKKQSGGSGQYGKVIGVLEPLDSENYTKVEFSDETVGTNIPKQFVPAVEKGFRDACEKGPLIGHKISGVRFVLEDGAHHMVDSNEISFIRAGEGAVKQALEKATVVILEPVMSVEIVAPNEFQGAVIAGVNRRHGVISGQDGADGYFTLYADIPLNDMFGYATELRSCTEGKGEYTMEYSRYQPCAASVQEDLVNKHLEATGQLPAKKSKWKN</sequence>
<reference key="1">
    <citation type="submission" date="2006-10" db="EMBL/GenBank/DDBJ databases">
        <authorList>
            <consortium name="NIH - Zebrafish Gene Collection (ZGC) project"/>
        </authorList>
    </citation>
    <scope>NUCLEOTIDE SEQUENCE [LARGE SCALE MRNA]</scope>
</reference>
<proteinExistence type="evidence at transcript level"/>
<organism>
    <name type="scientific">Danio rerio</name>
    <name type="common">Zebrafish</name>
    <name type="synonym">Brachydanio rerio</name>
    <dbReference type="NCBI Taxonomy" id="7955"/>
    <lineage>
        <taxon>Eukaryota</taxon>
        <taxon>Metazoa</taxon>
        <taxon>Chordata</taxon>
        <taxon>Craniata</taxon>
        <taxon>Vertebrata</taxon>
        <taxon>Euteleostomi</taxon>
        <taxon>Actinopterygii</taxon>
        <taxon>Neopterygii</taxon>
        <taxon>Teleostei</taxon>
        <taxon>Ostariophysi</taxon>
        <taxon>Cypriniformes</taxon>
        <taxon>Danionidae</taxon>
        <taxon>Danioninae</taxon>
        <taxon>Danio</taxon>
    </lineage>
</organism>
<gene>
    <name type="primary">gfm1</name>
    <name type="synonym">efg1</name>
    <name type="ORF">zgc:154041</name>
</gene>